<evidence type="ECO:0000255" key="1">
    <source>
        <dbReference type="HAMAP-Rule" id="MF_00767"/>
    </source>
</evidence>
<dbReference type="EC" id="3.5.1.96" evidence="1"/>
<dbReference type="EMBL" id="AE016795">
    <property type="protein sequence ID" value="AAO11125.2"/>
    <property type="molecule type" value="Genomic_DNA"/>
</dbReference>
<dbReference type="RefSeq" id="WP_011080619.1">
    <property type="nucleotide sequence ID" value="NC_004459.3"/>
</dbReference>
<dbReference type="SMR" id="Q8D926"/>
<dbReference type="KEGG" id="vvu:VV1_2783"/>
<dbReference type="HOGENOM" id="CLU_071608_0_0_6"/>
<dbReference type="UniPathway" id="UPA00185">
    <property type="reaction ID" value="UER00283"/>
</dbReference>
<dbReference type="Proteomes" id="UP000002275">
    <property type="component" value="Chromosome 1"/>
</dbReference>
<dbReference type="GO" id="GO:0016788">
    <property type="term" value="F:hydrolase activity, acting on ester bonds"/>
    <property type="evidence" value="ECO:0007669"/>
    <property type="project" value="UniProtKB-UniRule"/>
</dbReference>
<dbReference type="GO" id="GO:0009017">
    <property type="term" value="F:succinylglutamate desuccinylase activity"/>
    <property type="evidence" value="ECO:0007669"/>
    <property type="project" value="UniProtKB-EC"/>
</dbReference>
<dbReference type="GO" id="GO:0008270">
    <property type="term" value="F:zinc ion binding"/>
    <property type="evidence" value="ECO:0007669"/>
    <property type="project" value="UniProtKB-UniRule"/>
</dbReference>
<dbReference type="GO" id="GO:0019544">
    <property type="term" value="P:arginine catabolic process to glutamate"/>
    <property type="evidence" value="ECO:0007669"/>
    <property type="project" value="UniProtKB-UniRule"/>
</dbReference>
<dbReference type="GO" id="GO:0019545">
    <property type="term" value="P:arginine catabolic process to succinate"/>
    <property type="evidence" value="ECO:0007669"/>
    <property type="project" value="UniProtKB-UniRule"/>
</dbReference>
<dbReference type="CDD" id="cd03855">
    <property type="entry name" value="M14_ASTE"/>
    <property type="match status" value="1"/>
</dbReference>
<dbReference type="Gene3D" id="3.40.630.10">
    <property type="entry name" value="Zn peptidases"/>
    <property type="match status" value="1"/>
</dbReference>
<dbReference type="HAMAP" id="MF_00767">
    <property type="entry name" value="Arg_catab_AstE"/>
    <property type="match status" value="1"/>
</dbReference>
<dbReference type="InterPro" id="IPR050178">
    <property type="entry name" value="AspA/AstE_fam"/>
</dbReference>
<dbReference type="InterPro" id="IPR055438">
    <property type="entry name" value="AstE_AspA_cat"/>
</dbReference>
<dbReference type="InterPro" id="IPR007036">
    <property type="entry name" value="Aste_AspA_hybrid_dom"/>
</dbReference>
<dbReference type="InterPro" id="IPR016681">
    <property type="entry name" value="SuccinylGlu_desuccinylase"/>
</dbReference>
<dbReference type="NCBIfam" id="NF003706">
    <property type="entry name" value="PRK05324.1"/>
    <property type="match status" value="1"/>
</dbReference>
<dbReference type="PANTHER" id="PTHR15162">
    <property type="entry name" value="ASPARTOACYLASE"/>
    <property type="match status" value="1"/>
</dbReference>
<dbReference type="PANTHER" id="PTHR15162:SF7">
    <property type="entry name" value="SUCCINYLGLUTAMATE DESUCCINYLASE"/>
    <property type="match status" value="1"/>
</dbReference>
<dbReference type="Pfam" id="PF24827">
    <property type="entry name" value="AstE_AspA_cat"/>
    <property type="match status" value="1"/>
</dbReference>
<dbReference type="Pfam" id="PF04952">
    <property type="entry name" value="AstE_AspA_hybrid"/>
    <property type="match status" value="1"/>
</dbReference>
<dbReference type="PIRSF" id="PIRSF017020">
    <property type="entry name" value="AstE"/>
    <property type="match status" value="1"/>
</dbReference>
<dbReference type="SUPFAM" id="SSF53187">
    <property type="entry name" value="Zn-dependent exopeptidases"/>
    <property type="match status" value="1"/>
</dbReference>
<feature type="chain" id="PRO_0000174652" description="Succinylglutamate desuccinylase">
    <location>
        <begin position="1"/>
        <end position="342"/>
    </location>
</feature>
<feature type="active site" evidence="1">
    <location>
        <position position="219"/>
    </location>
</feature>
<feature type="binding site" evidence="1">
    <location>
        <position position="63"/>
    </location>
    <ligand>
        <name>Zn(2+)</name>
        <dbReference type="ChEBI" id="CHEBI:29105"/>
    </ligand>
</feature>
<feature type="binding site" evidence="1">
    <location>
        <position position="66"/>
    </location>
    <ligand>
        <name>Zn(2+)</name>
        <dbReference type="ChEBI" id="CHEBI:29105"/>
    </ligand>
</feature>
<feature type="binding site" evidence="1">
    <location>
        <position position="155"/>
    </location>
    <ligand>
        <name>Zn(2+)</name>
        <dbReference type="ChEBI" id="CHEBI:29105"/>
    </ligand>
</feature>
<protein>
    <recommendedName>
        <fullName evidence="1">Succinylglutamate desuccinylase</fullName>
        <ecNumber evidence="1">3.5.1.96</ecNumber>
    </recommendedName>
</protein>
<sequence length="342" mass="38889">MTNSLFRQSFLSDTLNMQQSVEAKATTLSNGVRLQLHQRGVLEVIPANNSAETKNIILSSGIHGDETAPMELIDKIVHDIETGFQDVQARCLFIIAHPEATNAHTRFIEENLNRLFDEKEHQPSKELVIADQLKLLVKAFFDNTPVESRWHLDLHCAIRASKHYSFAISPKTRHPTRSKALVDFVNHSHVEALLLSNSPSSTFSWFSAEYYSAQALTMELGRVARIGENELERFTALDLTMRDLIAEVTPEHLPKPAITYRVSRTIVRLHQDFDFRFDDQVENFTSFMHGEVFGHDGDKPLMAKNDNEAIVFPNRNVAIGQRAALMVCEVKARFEDDQLVYD</sequence>
<organism>
    <name type="scientific">Vibrio vulnificus (strain CMCP6)</name>
    <dbReference type="NCBI Taxonomy" id="216895"/>
    <lineage>
        <taxon>Bacteria</taxon>
        <taxon>Pseudomonadati</taxon>
        <taxon>Pseudomonadota</taxon>
        <taxon>Gammaproteobacteria</taxon>
        <taxon>Vibrionales</taxon>
        <taxon>Vibrionaceae</taxon>
        <taxon>Vibrio</taxon>
    </lineage>
</organism>
<reference key="1">
    <citation type="submission" date="2002-12" db="EMBL/GenBank/DDBJ databases">
        <title>Complete genome sequence of Vibrio vulnificus CMCP6.</title>
        <authorList>
            <person name="Rhee J.H."/>
            <person name="Kim S.Y."/>
            <person name="Chung S.S."/>
            <person name="Kim J.J."/>
            <person name="Moon Y.H."/>
            <person name="Jeong H."/>
            <person name="Choy H.E."/>
        </authorList>
    </citation>
    <scope>NUCLEOTIDE SEQUENCE [LARGE SCALE GENOMIC DNA]</scope>
    <source>
        <strain>CMCP6</strain>
    </source>
</reference>
<comment type="function">
    <text evidence="1">Transforms N(2)-succinylglutamate into succinate and glutamate.</text>
</comment>
<comment type="catalytic activity">
    <reaction evidence="1">
        <text>N-succinyl-L-glutamate + H2O = L-glutamate + succinate</text>
        <dbReference type="Rhea" id="RHEA:15169"/>
        <dbReference type="ChEBI" id="CHEBI:15377"/>
        <dbReference type="ChEBI" id="CHEBI:29985"/>
        <dbReference type="ChEBI" id="CHEBI:30031"/>
        <dbReference type="ChEBI" id="CHEBI:58763"/>
        <dbReference type="EC" id="3.5.1.96"/>
    </reaction>
</comment>
<comment type="cofactor">
    <cofactor evidence="1">
        <name>Zn(2+)</name>
        <dbReference type="ChEBI" id="CHEBI:29105"/>
    </cofactor>
    <text evidence="1">Binds 1 zinc ion per subunit.</text>
</comment>
<comment type="pathway">
    <text evidence="1">Amino-acid degradation; L-arginine degradation via AST pathway; L-glutamate and succinate from L-arginine: step 5/5.</text>
</comment>
<comment type="similarity">
    <text evidence="1">Belongs to the AspA/AstE family. Succinylglutamate desuccinylase subfamily.</text>
</comment>
<gene>
    <name evidence="1" type="primary">astE</name>
    <name type="ordered locus">VV1_2783</name>
</gene>
<keyword id="KW-0056">Arginine metabolism</keyword>
<keyword id="KW-0378">Hydrolase</keyword>
<keyword id="KW-0479">Metal-binding</keyword>
<keyword id="KW-0862">Zinc</keyword>
<name>ASTE_VIBVU</name>
<proteinExistence type="inferred from homology"/>
<accession>Q8D926</accession>